<sequence>MTAAFTVRVKDETASKLDQLAEKLDRSRSYMAAEAIEAFVEQQEWQLAEIEAGLTEADRGEFASDEDVAKVVRKYVKSARQS</sequence>
<dbReference type="EMBL" id="U00090">
    <property type="protein sequence ID" value="AAB91746.1"/>
    <property type="molecule type" value="Genomic_DNA"/>
</dbReference>
<dbReference type="PIR" id="T10869">
    <property type="entry name" value="T10869"/>
</dbReference>
<dbReference type="RefSeq" id="NP_443944.1">
    <property type="nucleotide sequence ID" value="NC_000914.2"/>
</dbReference>
<dbReference type="RefSeq" id="WP_010875306.1">
    <property type="nucleotide sequence ID" value="NC_000914.2"/>
</dbReference>
<dbReference type="SMR" id="P55533"/>
<dbReference type="KEGG" id="rhi:NGR_a02810"/>
<dbReference type="PATRIC" id="fig|394.7.peg.299"/>
<dbReference type="eggNOG" id="COG3905">
    <property type="taxonomic scope" value="Bacteria"/>
</dbReference>
<dbReference type="HOGENOM" id="CLU_155311_5_2_5"/>
<dbReference type="OrthoDB" id="9812023at2"/>
<dbReference type="Proteomes" id="UP000001054">
    <property type="component" value="Plasmid pNGR234a"/>
</dbReference>
<dbReference type="GO" id="GO:0006355">
    <property type="term" value="P:regulation of DNA-templated transcription"/>
    <property type="evidence" value="ECO:0007669"/>
    <property type="project" value="InterPro"/>
</dbReference>
<dbReference type="CDD" id="cd22233">
    <property type="entry name" value="RHH_CopAso-like"/>
    <property type="match status" value="1"/>
</dbReference>
<dbReference type="InterPro" id="IPR002145">
    <property type="entry name" value="CopG"/>
</dbReference>
<dbReference type="InterPro" id="IPR052991">
    <property type="entry name" value="Non-func_TypeII_TA_Antitoxin"/>
</dbReference>
<dbReference type="InterPro" id="IPR010985">
    <property type="entry name" value="Ribbon_hlx_hlx"/>
</dbReference>
<dbReference type="PANTHER" id="PTHR40688">
    <property type="match status" value="1"/>
</dbReference>
<dbReference type="PANTHER" id="PTHR40688:SF2">
    <property type="entry name" value="RIBBON-HELIX-HELIX PROTEIN COPG DOMAIN-CONTAINING PROTEIN"/>
    <property type="match status" value="1"/>
</dbReference>
<dbReference type="Pfam" id="PF01402">
    <property type="entry name" value="RHH_1"/>
    <property type="match status" value="1"/>
</dbReference>
<dbReference type="SUPFAM" id="SSF47598">
    <property type="entry name" value="Ribbon-helix-helix"/>
    <property type="match status" value="1"/>
</dbReference>
<proteinExistence type="predicted"/>
<keyword id="KW-0614">Plasmid</keyword>
<keyword id="KW-1185">Reference proteome</keyword>
<name>Y4KO_SINFN</name>
<accession>P55533</accession>
<organism>
    <name type="scientific">Sinorhizobium fredii (strain NBRC 101917 / NGR234)</name>
    <dbReference type="NCBI Taxonomy" id="394"/>
    <lineage>
        <taxon>Bacteria</taxon>
        <taxon>Pseudomonadati</taxon>
        <taxon>Pseudomonadota</taxon>
        <taxon>Alphaproteobacteria</taxon>
        <taxon>Hyphomicrobiales</taxon>
        <taxon>Rhizobiaceae</taxon>
        <taxon>Sinorhizobium/Ensifer group</taxon>
        <taxon>Sinorhizobium</taxon>
    </lineage>
</organism>
<gene>
    <name type="ordered locus">NGR_a02810</name>
    <name type="ORF">y4kO</name>
</gene>
<geneLocation type="plasmid">
    <name>sym pNGR234a</name>
</geneLocation>
<feature type="chain" id="PRO_0000200894" description="Uncharacterized protein y4kO">
    <location>
        <begin position="1"/>
        <end position="82"/>
    </location>
</feature>
<protein>
    <recommendedName>
        <fullName>Uncharacterized protein y4kO</fullName>
    </recommendedName>
</protein>
<reference key="1">
    <citation type="journal article" date="1997" name="Nature">
        <title>Molecular basis of symbiosis between Rhizobium and legumes.</title>
        <authorList>
            <person name="Freiberg C.A."/>
            <person name="Fellay R."/>
            <person name="Bairoch A."/>
            <person name="Broughton W.J."/>
            <person name="Rosenthal A."/>
            <person name="Perret X."/>
        </authorList>
    </citation>
    <scope>NUCLEOTIDE SEQUENCE [LARGE SCALE GENOMIC DNA]</scope>
    <source>
        <strain>NBRC 101917 / NGR234</strain>
    </source>
</reference>
<reference key="2">
    <citation type="journal article" date="2009" name="Appl. Environ. Microbiol.">
        <title>Rhizobium sp. strain NGR234 possesses a remarkable number of secretion systems.</title>
        <authorList>
            <person name="Schmeisser C."/>
            <person name="Liesegang H."/>
            <person name="Krysciak D."/>
            <person name="Bakkou N."/>
            <person name="Le Quere A."/>
            <person name="Wollherr A."/>
            <person name="Heinemeyer I."/>
            <person name="Morgenstern B."/>
            <person name="Pommerening-Roeser A."/>
            <person name="Flores M."/>
            <person name="Palacios R."/>
            <person name="Brenner S."/>
            <person name="Gottschalk G."/>
            <person name="Schmitz R.A."/>
            <person name="Broughton W.J."/>
            <person name="Perret X."/>
            <person name="Strittmatter A.W."/>
            <person name="Streit W.R."/>
        </authorList>
    </citation>
    <scope>NUCLEOTIDE SEQUENCE [LARGE SCALE GENOMIC DNA]</scope>
    <source>
        <strain>NBRC 101917 / NGR234</strain>
    </source>
</reference>